<dbReference type="EC" id="2.1.1.166" evidence="1"/>
<dbReference type="EMBL" id="CP001338">
    <property type="protein sequence ID" value="ACL16153.1"/>
    <property type="molecule type" value="Genomic_DNA"/>
</dbReference>
<dbReference type="RefSeq" id="WP_012617472.1">
    <property type="nucleotide sequence ID" value="NC_011832.1"/>
</dbReference>
<dbReference type="SMR" id="B8GG79"/>
<dbReference type="STRING" id="521011.Mpal_0791"/>
<dbReference type="GeneID" id="7270532"/>
<dbReference type="KEGG" id="mpl:Mpal_0791"/>
<dbReference type="eggNOG" id="arCOG00079">
    <property type="taxonomic scope" value="Archaea"/>
</dbReference>
<dbReference type="HOGENOM" id="CLU_009422_4_0_2"/>
<dbReference type="OrthoDB" id="26307at2157"/>
<dbReference type="Proteomes" id="UP000002457">
    <property type="component" value="Chromosome"/>
</dbReference>
<dbReference type="GO" id="GO:0005737">
    <property type="term" value="C:cytoplasm"/>
    <property type="evidence" value="ECO:0007669"/>
    <property type="project" value="UniProtKB-SubCell"/>
</dbReference>
<dbReference type="GO" id="GO:0008650">
    <property type="term" value="F:rRNA (uridine-2'-O-)-methyltransferase activity"/>
    <property type="evidence" value="ECO:0007669"/>
    <property type="project" value="UniProtKB-UniRule"/>
</dbReference>
<dbReference type="Gene3D" id="3.40.50.150">
    <property type="entry name" value="Vaccinia Virus protein VP39"/>
    <property type="match status" value="1"/>
</dbReference>
<dbReference type="HAMAP" id="MF_01547">
    <property type="entry name" value="RNA_methyltr_E"/>
    <property type="match status" value="1"/>
</dbReference>
<dbReference type="InterPro" id="IPR050082">
    <property type="entry name" value="RNA_methyltr_RlmE"/>
</dbReference>
<dbReference type="InterPro" id="IPR002877">
    <property type="entry name" value="RNA_MeTrfase_FtsJ_dom"/>
</dbReference>
<dbReference type="InterPro" id="IPR015507">
    <property type="entry name" value="rRNA-MeTfrase_E"/>
</dbReference>
<dbReference type="InterPro" id="IPR029063">
    <property type="entry name" value="SAM-dependent_MTases_sf"/>
</dbReference>
<dbReference type="PANTHER" id="PTHR10920:SF13">
    <property type="entry name" value="PRE-RRNA 2'-O-RIBOSE RNA METHYLTRANSFERASE FTSJ3"/>
    <property type="match status" value="1"/>
</dbReference>
<dbReference type="PANTHER" id="PTHR10920">
    <property type="entry name" value="RIBOSOMAL RNA METHYLTRANSFERASE"/>
    <property type="match status" value="1"/>
</dbReference>
<dbReference type="Pfam" id="PF01728">
    <property type="entry name" value="FtsJ"/>
    <property type="match status" value="1"/>
</dbReference>
<dbReference type="PIRSF" id="PIRSF005461">
    <property type="entry name" value="23S_rRNA_mtase"/>
    <property type="match status" value="1"/>
</dbReference>
<dbReference type="SUPFAM" id="SSF53335">
    <property type="entry name" value="S-adenosyl-L-methionine-dependent methyltransferases"/>
    <property type="match status" value="1"/>
</dbReference>
<sequence>MGSQWGKDKVYRRAMNEGFRSRAAYKLQEIQERFSIIREDDNIVDLGAAPGSWLQVERTLTKGKVLGVDLNPIPSIDGVMTVVGDLTTSEVQQQVKDLVGVVNVVLCDASPKLSGHKCYDQARAIGLGEDALMFAARTMKQGGNMAMKSFQGEMFHELLEEVKKHFYVVKTFHTKSTRRGSTEIYIVAKNFIGSSGDVEGHIQ</sequence>
<protein>
    <recommendedName>
        <fullName evidence="1">Ribosomal RNA large subunit methyltransferase E</fullName>
        <ecNumber evidence="1">2.1.1.166</ecNumber>
    </recommendedName>
    <alternativeName>
        <fullName evidence="1">23S rRNA Um2552 methyltransferase</fullName>
    </alternativeName>
    <alternativeName>
        <fullName evidence="1">rRNA (uridine-2'-O-)-methyltransferase</fullName>
    </alternativeName>
</protein>
<feature type="chain" id="PRO_1000185299" description="Ribosomal RNA large subunit methyltransferase E">
    <location>
        <begin position="1"/>
        <end position="203"/>
    </location>
</feature>
<feature type="active site" description="Proton acceptor" evidence="1">
    <location>
        <position position="148"/>
    </location>
</feature>
<feature type="binding site" evidence="1">
    <location>
        <position position="51"/>
    </location>
    <ligand>
        <name>S-adenosyl-L-methionine</name>
        <dbReference type="ChEBI" id="CHEBI:59789"/>
    </ligand>
</feature>
<feature type="binding site" evidence="1">
    <location>
        <position position="53"/>
    </location>
    <ligand>
        <name>S-adenosyl-L-methionine</name>
        <dbReference type="ChEBI" id="CHEBI:59789"/>
    </ligand>
</feature>
<feature type="binding site" evidence="1">
    <location>
        <position position="69"/>
    </location>
    <ligand>
        <name>S-adenosyl-L-methionine</name>
        <dbReference type="ChEBI" id="CHEBI:59789"/>
    </ligand>
</feature>
<feature type="binding site" evidence="1">
    <location>
        <position position="85"/>
    </location>
    <ligand>
        <name>S-adenosyl-L-methionine</name>
        <dbReference type="ChEBI" id="CHEBI:59789"/>
    </ligand>
</feature>
<feature type="binding site" evidence="1">
    <location>
        <position position="108"/>
    </location>
    <ligand>
        <name>S-adenosyl-L-methionine</name>
        <dbReference type="ChEBI" id="CHEBI:59789"/>
    </ligand>
</feature>
<accession>B8GG79</accession>
<evidence type="ECO:0000255" key="1">
    <source>
        <dbReference type="HAMAP-Rule" id="MF_01547"/>
    </source>
</evidence>
<comment type="function">
    <text evidence="1">Specifically methylates the uridine in position 2552 of 23S rRNA at the 2'-O position of the ribose in the fully assembled 50S ribosomal subunit.</text>
</comment>
<comment type="catalytic activity">
    <reaction evidence="1">
        <text>uridine(2552) in 23S rRNA + S-adenosyl-L-methionine = 2'-O-methyluridine(2552) in 23S rRNA + S-adenosyl-L-homocysteine + H(+)</text>
        <dbReference type="Rhea" id="RHEA:42720"/>
        <dbReference type="Rhea" id="RHEA-COMP:10202"/>
        <dbReference type="Rhea" id="RHEA-COMP:10203"/>
        <dbReference type="ChEBI" id="CHEBI:15378"/>
        <dbReference type="ChEBI" id="CHEBI:57856"/>
        <dbReference type="ChEBI" id="CHEBI:59789"/>
        <dbReference type="ChEBI" id="CHEBI:65315"/>
        <dbReference type="ChEBI" id="CHEBI:74478"/>
        <dbReference type="EC" id="2.1.1.166"/>
    </reaction>
</comment>
<comment type="subcellular location">
    <subcellularLocation>
        <location evidence="1">Cytoplasm</location>
    </subcellularLocation>
</comment>
<comment type="similarity">
    <text evidence="1">Belongs to the class I-like SAM-binding methyltransferase superfamily. RNA methyltransferase RlmE family.</text>
</comment>
<name>RLME_METPE</name>
<gene>
    <name evidence="1" type="primary">rlmE</name>
    <name evidence="1" type="synonym">rrmJ</name>
    <name type="ordered locus">Mpal_0791</name>
</gene>
<keyword id="KW-0963">Cytoplasm</keyword>
<keyword id="KW-0489">Methyltransferase</keyword>
<keyword id="KW-1185">Reference proteome</keyword>
<keyword id="KW-0698">rRNA processing</keyword>
<keyword id="KW-0949">S-adenosyl-L-methionine</keyword>
<keyword id="KW-0808">Transferase</keyword>
<organism>
    <name type="scientific">Methanosphaerula palustris (strain ATCC BAA-1556 / DSM 19958 / E1-9c)</name>
    <dbReference type="NCBI Taxonomy" id="521011"/>
    <lineage>
        <taxon>Archaea</taxon>
        <taxon>Methanobacteriati</taxon>
        <taxon>Methanobacteriota</taxon>
        <taxon>Stenosarchaea group</taxon>
        <taxon>Methanomicrobia</taxon>
        <taxon>Methanomicrobiales</taxon>
        <taxon>Methanoregulaceae</taxon>
        <taxon>Methanosphaerula</taxon>
    </lineage>
</organism>
<proteinExistence type="inferred from homology"/>
<reference key="1">
    <citation type="journal article" date="2015" name="Genome Announc.">
        <title>Complete Genome Sequence of Methanosphaerula palustris E1-9CT, a Hydrogenotrophic Methanogen Isolated from a Minerotrophic Fen Peatland.</title>
        <authorList>
            <person name="Cadillo-Quiroz H."/>
            <person name="Browne P."/>
            <person name="Kyrpides N."/>
            <person name="Woyke T."/>
            <person name="Goodwin L."/>
            <person name="Detter C."/>
            <person name="Yavitt J.B."/>
            <person name="Zinder S.H."/>
        </authorList>
    </citation>
    <scope>NUCLEOTIDE SEQUENCE [LARGE SCALE GENOMIC DNA]</scope>
    <source>
        <strain>ATCC BAA-1556 / DSM 19958 / E1-9c</strain>
    </source>
</reference>